<reference key="1">
    <citation type="submission" date="2006-10" db="EMBL/GenBank/DDBJ databases">
        <authorList>
            <consortium name="NIH - Mammalian Gene Collection (MGC) project"/>
        </authorList>
    </citation>
    <scope>NUCLEOTIDE SEQUENCE [LARGE SCALE MRNA]</scope>
    <source>
        <strain>Crossbred X Angus</strain>
        <tissue>Ileum</tissue>
    </source>
</reference>
<feature type="chain" id="PRO_0000287358" description="LysM and putative peptidoglycan-binding domain-containing protein 1">
    <location>
        <begin position="1"/>
        <end position="225"/>
    </location>
</feature>
<feature type="domain" description="LysM" evidence="4">
    <location>
        <begin position="40"/>
        <end position="84"/>
    </location>
</feature>
<feature type="region of interest" description="Disordered" evidence="5">
    <location>
        <begin position="97"/>
        <end position="153"/>
    </location>
</feature>
<feature type="region of interest" description="Disordered" evidence="5">
    <location>
        <begin position="170"/>
        <end position="225"/>
    </location>
</feature>
<feature type="compositionally biased region" description="Acidic residues" evidence="5">
    <location>
        <begin position="98"/>
        <end position="107"/>
    </location>
</feature>
<feature type="compositionally biased region" description="Basic and acidic residues" evidence="5">
    <location>
        <begin position="112"/>
        <end position="121"/>
    </location>
</feature>
<feature type="compositionally biased region" description="Basic and acidic residues" evidence="5">
    <location>
        <begin position="214"/>
        <end position="225"/>
    </location>
</feature>
<feature type="modified residue" description="Phosphoserine" evidence="2">
    <location>
        <position position="23"/>
    </location>
</feature>
<feature type="modified residue" description="Phosphoserine" evidence="2">
    <location>
        <position position="33"/>
    </location>
</feature>
<feature type="modified residue" description="Phosphoserine" evidence="2">
    <location>
        <position position="99"/>
    </location>
</feature>
<feature type="modified residue" description="Phosphoserine" evidence="2">
    <location>
        <position position="164"/>
    </location>
</feature>
<feature type="modified residue" description="Phosphoserine" evidence="1">
    <location>
        <position position="179"/>
    </location>
</feature>
<feature type="modified residue" description="Phosphoserine" evidence="3">
    <location>
        <position position="192"/>
    </location>
</feature>
<feature type="modified residue" description="Phosphoserine" evidence="2">
    <location>
        <position position="210"/>
    </location>
</feature>
<accession>A0JNI1</accession>
<keyword id="KW-0597">Phosphoprotein</keyword>
<keyword id="KW-1185">Reference proteome</keyword>
<proteinExistence type="evidence at transcript level"/>
<dbReference type="EMBL" id="BC126694">
    <property type="protein sequence ID" value="AAI26695.1"/>
    <property type="molecule type" value="mRNA"/>
</dbReference>
<dbReference type="RefSeq" id="NP_001071366.1">
    <property type="nucleotide sequence ID" value="NM_001077898.1"/>
</dbReference>
<dbReference type="SMR" id="A0JNI1"/>
<dbReference type="FunCoup" id="A0JNI1">
    <property type="interactions" value="1357"/>
</dbReference>
<dbReference type="STRING" id="9913.ENSBTAP00000027183"/>
<dbReference type="PaxDb" id="9913-ENSBTAP00000027183"/>
<dbReference type="GeneID" id="510653"/>
<dbReference type="KEGG" id="bta:510653"/>
<dbReference type="CTD" id="388695"/>
<dbReference type="eggNOG" id="ENOG502RZER">
    <property type="taxonomic scope" value="Eukaryota"/>
</dbReference>
<dbReference type="InParanoid" id="A0JNI1"/>
<dbReference type="OrthoDB" id="2107166at2759"/>
<dbReference type="Proteomes" id="UP000009136">
    <property type="component" value="Unplaced"/>
</dbReference>
<dbReference type="CDD" id="cd00118">
    <property type="entry name" value="LysM"/>
    <property type="match status" value="1"/>
</dbReference>
<dbReference type="FunFam" id="3.10.350.10:FF:000010">
    <property type="entry name" value="LysM and putative peptidoglycan-binding domain-containing protein 1"/>
    <property type="match status" value="1"/>
</dbReference>
<dbReference type="Gene3D" id="3.10.350.10">
    <property type="entry name" value="LysM domain"/>
    <property type="match status" value="1"/>
</dbReference>
<dbReference type="InterPro" id="IPR045030">
    <property type="entry name" value="LYSM1-4"/>
</dbReference>
<dbReference type="InterPro" id="IPR018392">
    <property type="entry name" value="LysM_dom"/>
</dbReference>
<dbReference type="InterPro" id="IPR036779">
    <property type="entry name" value="LysM_dom_sf"/>
</dbReference>
<dbReference type="PANTHER" id="PTHR20932:SF2">
    <property type="entry name" value="AND PUTATIVE PEPTIDOGLYCAN-BINDING DOMAIN-CONTAINING PROTEIN 1-RELATED"/>
    <property type="match status" value="1"/>
</dbReference>
<dbReference type="PANTHER" id="PTHR20932">
    <property type="entry name" value="LYSM AND PUTATIVE PEPTIDOGLYCAN-BINDING DOMAIN-CONTAINING PROTEIN"/>
    <property type="match status" value="1"/>
</dbReference>
<dbReference type="Pfam" id="PF01476">
    <property type="entry name" value="LysM"/>
    <property type="match status" value="1"/>
</dbReference>
<dbReference type="SMART" id="SM00257">
    <property type="entry name" value="LysM"/>
    <property type="match status" value="1"/>
</dbReference>
<dbReference type="SUPFAM" id="SSF54106">
    <property type="entry name" value="LysM domain"/>
    <property type="match status" value="1"/>
</dbReference>
<dbReference type="PROSITE" id="PS51782">
    <property type="entry name" value="LYSM"/>
    <property type="match status" value="1"/>
</dbReference>
<gene>
    <name type="primary">LYSMD1</name>
</gene>
<protein>
    <recommendedName>
        <fullName>LysM and putative peptidoglycan-binding domain-containing protein 1</fullName>
    </recommendedName>
</protein>
<name>LYSM1_BOVIN</name>
<organism>
    <name type="scientific">Bos taurus</name>
    <name type="common">Bovine</name>
    <dbReference type="NCBI Taxonomy" id="9913"/>
    <lineage>
        <taxon>Eukaryota</taxon>
        <taxon>Metazoa</taxon>
        <taxon>Chordata</taxon>
        <taxon>Craniata</taxon>
        <taxon>Vertebrata</taxon>
        <taxon>Euteleostomi</taxon>
        <taxon>Mammalia</taxon>
        <taxon>Eutheria</taxon>
        <taxon>Laurasiatheria</taxon>
        <taxon>Artiodactyla</taxon>
        <taxon>Ruminantia</taxon>
        <taxon>Pecora</taxon>
        <taxon>Bovidae</taxon>
        <taxon>Bovinae</taxon>
        <taxon>Bos</taxon>
    </lineage>
</organism>
<sequence>MASPSRQAPLGGSGLLHGSRARSYGSLVQSACSPVRERRLEHQLAPGDTLAGLALKYGVTMEQIKRANRLYTNDSIFLKKTLHIPILTEPRDLFNGLDSEEEKDGEEAVQPSKDEVRPHSAERKKRERGLGHANGEPLPTAGQEPARHDLSASDFLKKLDSQISLSKKAAAQKLKKGESGIPGEDSSLHLSSPRMQQRAVLGPVPLTQTSRTRTLRDQEDEIFKL</sequence>
<evidence type="ECO:0000250" key="1">
    <source>
        <dbReference type="UniProtKB" id="Q5HZA4"/>
    </source>
</evidence>
<evidence type="ECO:0000250" key="2">
    <source>
        <dbReference type="UniProtKB" id="Q96S90"/>
    </source>
</evidence>
<evidence type="ECO:0000250" key="3">
    <source>
        <dbReference type="UniProtKB" id="Q9D0E3"/>
    </source>
</evidence>
<evidence type="ECO:0000255" key="4">
    <source>
        <dbReference type="PROSITE-ProRule" id="PRU01118"/>
    </source>
</evidence>
<evidence type="ECO:0000256" key="5">
    <source>
        <dbReference type="SAM" id="MobiDB-lite"/>
    </source>
</evidence>